<protein>
    <recommendedName>
        <fullName evidence="1">Erythronate-4-phosphate dehydrogenase</fullName>
        <ecNumber evidence="1">1.1.1.290</ecNumber>
    </recommendedName>
</protein>
<evidence type="ECO:0000255" key="1">
    <source>
        <dbReference type="HAMAP-Rule" id="MF_01825"/>
    </source>
</evidence>
<comment type="function">
    <text evidence="1">Catalyzes the oxidation of erythronate-4-phosphate to 3-hydroxy-2-oxo-4-phosphonooxybutanoate.</text>
</comment>
<comment type="catalytic activity">
    <reaction evidence="1">
        <text>4-phospho-D-erythronate + NAD(+) = (R)-3-hydroxy-2-oxo-4-phosphooxybutanoate + NADH + H(+)</text>
        <dbReference type="Rhea" id="RHEA:18829"/>
        <dbReference type="ChEBI" id="CHEBI:15378"/>
        <dbReference type="ChEBI" id="CHEBI:57540"/>
        <dbReference type="ChEBI" id="CHEBI:57945"/>
        <dbReference type="ChEBI" id="CHEBI:58538"/>
        <dbReference type="ChEBI" id="CHEBI:58766"/>
        <dbReference type="EC" id="1.1.1.290"/>
    </reaction>
</comment>
<comment type="pathway">
    <text evidence="1">Cofactor biosynthesis; pyridoxine 5'-phosphate biosynthesis; pyridoxine 5'-phosphate from D-erythrose 4-phosphate: step 2/5.</text>
</comment>
<comment type="subunit">
    <text evidence="1">Homodimer.</text>
</comment>
<comment type="subcellular location">
    <subcellularLocation>
        <location evidence="1">Cytoplasm</location>
    </subcellularLocation>
</comment>
<comment type="similarity">
    <text evidence="1">Belongs to the D-isomer specific 2-hydroxyacid dehydrogenase family. PdxB subfamily.</text>
</comment>
<dbReference type="EC" id="1.1.1.290" evidence="1"/>
<dbReference type="EMBL" id="CU928160">
    <property type="protein sequence ID" value="CAQ99239.1"/>
    <property type="molecule type" value="Genomic_DNA"/>
</dbReference>
<dbReference type="RefSeq" id="WP_000699121.1">
    <property type="nucleotide sequence ID" value="NC_011741.1"/>
</dbReference>
<dbReference type="SMR" id="B7M6K1"/>
<dbReference type="GeneID" id="93774854"/>
<dbReference type="KEGG" id="ecr:ECIAI1_2397"/>
<dbReference type="HOGENOM" id="CLU_019796_4_0_6"/>
<dbReference type="UniPathway" id="UPA00244">
    <property type="reaction ID" value="UER00310"/>
</dbReference>
<dbReference type="GO" id="GO:0005829">
    <property type="term" value="C:cytosol"/>
    <property type="evidence" value="ECO:0007669"/>
    <property type="project" value="UniProtKB-ARBA"/>
</dbReference>
<dbReference type="GO" id="GO:0033711">
    <property type="term" value="F:4-phosphoerythronate dehydrogenase activity"/>
    <property type="evidence" value="ECO:0007669"/>
    <property type="project" value="UniProtKB-EC"/>
</dbReference>
<dbReference type="GO" id="GO:0051287">
    <property type="term" value="F:NAD binding"/>
    <property type="evidence" value="ECO:0007669"/>
    <property type="project" value="InterPro"/>
</dbReference>
<dbReference type="GO" id="GO:0046983">
    <property type="term" value="F:protein dimerization activity"/>
    <property type="evidence" value="ECO:0007669"/>
    <property type="project" value="InterPro"/>
</dbReference>
<dbReference type="GO" id="GO:0036001">
    <property type="term" value="P:'de novo' pyridoxal 5'-phosphate biosynthetic process"/>
    <property type="evidence" value="ECO:0007669"/>
    <property type="project" value="TreeGrafter"/>
</dbReference>
<dbReference type="GO" id="GO:0008615">
    <property type="term" value="P:pyridoxine biosynthetic process"/>
    <property type="evidence" value="ECO:0007669"/>
    <property type="project" value="UniProtKB-UniRule"/>
</dbReference>
<dbReference type="CDD" id="cd12158">
    <property type="entry name" value="ErythrP_dh"/>
    <property type="match status" value="1"/>
</dbReference>
<dbReference type="FunFam" id="3.30.1370.170:FF:000001">
    <property type="entry name" value="Erythronate-4-phosphate dehydrogenase"/>
    <property type="match status" value="1"/>
</dbReference>
<dbReference type="FunFam" id="3.40.50.720:FF:000093">
    <property type="entry name" value="Erythronate-4-phosphate dehydrogenase"/>
    <property type="match status" value="1"/>
</dbReference>
<dbReference type="Gene3D" id="3.30.1370.170">
    <property type="match status" value="1"/>
</dbReference>
<dbReference type="Gene3D" id="3.40.50.720">
    <property type="entry name" value="NAD(P)-binding Rossmann-like Domain"/>
    <property type="match status" value="2"/>
</dbReference>
<dbReference type="HAMAP" id="MF_01825">
    <property type="entry name" value="PdxB"/>
    <property type="match status" value="1"/>
</dbReference>
<dbReference type="InterPro" id="IPR006139">
    <property type="entry name" value="D-isomer_2_OHA_DH_cat_dom"/>
</dbReference>
<dbReference type="InterPro" id="IPR029753">
    <property type="entry name" value="D-isomer_DH_CS"/>
</dbReference>
<dbReference type="InterPro" id="IPR029752">
    <property type="entry name" value="D-isomer_DH_CS1"/>
</dbReference>
<dbReference type="InterPro" id="IPR006140">
    <property type="entry name" value="D-isomer_DH_NAD-bd"/>
</dbReference>
<dbReference type="InterPro" id="IPR020921">
    <property type="entry name" value="Erythronate-4-P_DHase"/>
</dbReference>
<dbReference type="InterPro" id="IPR024531">
    <property type="entry name" value="Erythronate-4-P_DHase_dimer"/>
</dbReference>
<dbReference type="InterPro" id="IPR036291">
    <property type="entry name" value="NAD(P)-bd_dom_sf"/>
</dbReference>
<dbReference type="InterPro" id="IPR038251">
    <property type="entry name" value="PdxB_dimer_sf"/>
</dbReference>
<dbReference type="NCBIfam" id="NF001309">
    <property type="entry name" value="PRK00257.1"/>
    <property type="match status" value="1"/>
</dbReference>
<dbReference type="NCBIfam" id="NF011966">
    <property type="entry name" value="PRK15438.1"/>
    <property type="match status" value="1"/>
</dbReference>
<dbReference type="PANTHER" id="PTHR42938">
    <property type="entry name" value="FORMATE DEHYDROGENASE 1"/>
    <property type="match status" value="1"/>
</dbReference>
<dbReference type="PANTHER" id="PTHR42938:SF9">
    <property type="entry name" value="FORMATE DEHYDROGENASE 1"/>
    <property type="match status" value="1"/>
</dbReference>
<dbReference type="Pfam" id="PF00389">
    <property type="entry name" value="2-Hacid_dh"/>
    <property type="match status" value="1"/>
</dbReference>
<dbReference type="Pfam" id="PF02826">
    <property type="entry name" value="2-Hacid_dh_C"/>
    <property type="match status" value="1"/>
</dbReference>
<dbReference type="Pfam" id="PF11890">
    <property type="entry name" value="DUF3410"/>
    <property type="match status" value="1"/>
</dbReference>
<dbReference type="SUPFAM" id="SSF52283">
    <property type="entry name" value="Formate/glycerate dehydrogenase catalytic domain-like"/>
    <property type="match status" value="1"/>
</dbReference>
<dbReference type="SUPFAM" id="SSF51735">
    <property type="entry name" value="NAD(P)-binding Rossmann-fold domains"/>
    <property type="match status" value="1"/>
</dbReference>
<dbReference type="PROSITE" id="PS00065">
    <property type="entry name" value="D_2_HYDROXYACID_DH_1"/>
    <property type="match status" value="1"/>
</dbReference>
<dbReference type="PROSITE" id="PS00671">
    <property type="entry name" value="D_2_HYDROXYACID_DH_3"/>
    <property type="match status" value="1"/>
</dbReference>
<feature type="chain" id="PRO_1000188264" description="Erythronate-4-phosphate dehydrogenase">
    <location>
        <begin position="1"/>
        <end position="378"/>
    </location>
</feature>
<feature type="active site" evidence="1">
    <location>
        <position position="208"/>
    </location>
</feature>
<feature type="active site" evidence="1">
    <location>
        <position position="237"/>
    </location>
</feature>
<feature type="active site" description="Proton donor" evidence="1">
    <location>
        <position position="254"/>
    </location>
</feature>
<feature type="binding site" evidence="1">
    <location>
        <position position="45"/>
    </location>
    <ligand>
        <name>substrate</name>
    </ligand>
</feature>
<feature type="binding site" evidence="1">
    <location>
        <position position="66"/>
    </location>
    <ligand>
        <name>substrate</name>
    </ligand>
</feature>
<feature type="binding site" evidence="1">
    <location>
        <position position="146"/>
    </location>
    <ligand>
        <name>NAD(+)</name>
        <dbReference type="ChEBI" id="CHEBI:57540"/>
    </ligand>
</feature>
<feature type="binding site" evidence="1">
    <location>
        <position position="175"/>
    </location>
    <ligand>
        <name>NAD(+)</name>
        <dbReference type="ChEBI" id="CHEBI:57540"/>
    </ligand>
</feature>
<feature type="binding site" evidence="1">
    <location>
        <position position="232"/>
    </location>
    <ligand>
        <name>NAD(+)</name>
        <dbReference type="ChEBI" id="CHEBI:57540"/>
    </ligand>
</feature>
<feature type="binding site" evidence="1">
    <location>
        <position position="257"/>
    </location>
    <ligand>
        <name>NAD(+)</name>
        <dbReference type="ChEBI" id="CHEBI:57540"/>
    </ligand>
</feature>
<feature type="binding site" evidence="1">
    <location>
        <position position="258"/>
    </location>
    <ligand>
        <name>substrate</name>
    </ligand>
</feature>
<accession>B7M6K1</accession>
<name>PDXB_ECO8A</name>
<proteinExistence type="inferred from homology"/>
<keyword id="KW-0963">Cytoplasm</keyword>
<keyword id="KW-0520">NAD</keyword>
<keyword id="KW-0560">Oxidoreductase</keyword>
<keyword id="KW-0664">Pyridoxine biosynthesis</keyword>
<reference key="1">
    <citation type="journal article" date="2009" name="PLoS Genet.">
        <title>Organised genome dynamics in the Escherichia coli species results in highly diverse adaptive paths.</title>
        <authorList>
            <person name="Touchon M."/>
            <person name="Hoede C."/>
            <person name="Tenaillon O."/>
            <person name="Barbe V."/>
            <person name="Baeriswyl S."/>
            <person name="Bidet P."/>
            <person name="Bingen E."/>
            <person name="Bonacorsi S."/>
            <person name="Bouchier C."/>
            <person name="Bouvet O."/>
            <person name="Calteau A."/>
            <person name="Chiapello H."/>
            <person name="Clermont O."/>
            <person name="Cruveiller S."/>
            <person name="Danchin A."/>
            <person name="Diard M."/>
            <person name="Dossat C."/>
            <person name="Karoui M.E."/>
            <person name="Frapy E."/>
            <person name="Garry L."/>
            <person name="Ghigo J.M."/>
            <person name="Gilles A.M."/>
            <person name="Johnson J."/>
            <person name="Le Bouguenec C."/>
            <person name="Lescat M."/>
            <person name="Mangenot S."/>
            <person name="Martinez-Jehanne V."/>
            <person name="Matic I."/>
            <person name="Nassif X."/>
            <person name="Oztas S."/>
            <person name="Petit M.A."/>
            <person name="Pichon C."/>
            <person name="Rouy Z."/>
            <person name="Ruf C.S."/>
            <person name="Schneider D."/>
            <person name="Tourret J."/>
            <person name="Vacherie B."/>
            <person name="Vallenet D."/>
            <person name="Medigue C."/>
            <person name="Rocha E.P.C."/>
            <person name="Denamur E."/>
        </authorList>
    </citation>
    <scope>NUCLEOTIDE SEQUENCE [LARGE SCALE GENOMIC DNA]</scope>
    <source>
        <strain>IAI1</strain>
    </source>
</reference>
<gene>
    <name evidence="1" type="primary">pdxB</name>
    <name type="ordered locus">ECIAI1_2397</name>
</gene>
<sequence>MKILVDENMPYARDLFSRLGEVTAVPGRPIPVAQLADADALMVRSVTKVNESLLAGKPIKFVGTATAGTDHVDEAWLKQAGIGFSAAPGCNAIAVVEYVFSSLLMLAERDGFSLHDRTVGIVGVGNVGRRLQARLEALGIKTLLCDPPRADRGDEGDFRSLDELVQHADILTFHTPLFKDGPYKTLHLADEKLIRSLKPGAILINACRGAVVDNTALLTCLNEGQKLSVVLDVWEGEPELNVELLTKVDIGTPHIAGYTLEGKARGTTQVFEAYSKFIGHEQHVALDTLLPAPEFGRITLHGPLDQPTLKRLVHLVYDVRRDDAPLRKVAGIPGEFDKLRKNYLERREWSSLYVICDDASAASLLCKLGFNAVHHPAR</sequence>
<organism>
    <name type="scientific">Escherichia coli O8 (strain IAI1)</name>
    <dbReference type="NCBI Taxonomy" id="585034"/>
    <lineage>
        <taxon>Bacteria</taxon>
        <taxon>Pseudomonadati</taxon>
        <taxon>Pseudomonadota</taxon>
        <taxon>Gammaproteobacteria</taxon>
        <taxon>Enterobacterales</taxon>
        <taxon>Enterobacteriaceae</taxon>
        <taxon>Escherichia</taxon>
    </lineage>
</organism>